<feature type="initiator methionine" description="Removed" evidence="1">
    <location>
        <position position="1"/>
    </location>
</feature>
<feature type="chain" id="PRO_0000186654" description="PTS system mannose-specific EIIAB component">
    <location>
        <begin position="2"/>
        <end position="323"/>
    </location>
</feature>
<feature type="domain" description="PTS EIIA type-4" evidence="3">
    <location>
        <begin position="2"/>
        <end position="124"/>
    </location>
</feature>
<feature type="domain" description="PTS EIIB type-4" evidence="4">
    <location>
        <begin position="157"/>
        <end position="320"/>
    </location>
</feature>
<feature type="region of interest" description="Hinge" evidence="2">
    <location>
        <begin position="137"/>
        <end position="155"/>
    </location>
</feature>
<feature type="active site" description="Tele-phosphohistidine intermediate; for EIIA activity" evidence="3">
    <location>
        <position position="10"/>
    </location>
</feature>
<feature type="active site" description="Pros-phosphohistidine intermediate; for EIIB activity" evidence="2">
    <location>
        <position position="175"/>
    </location>
</feature>
<feature type="site" description="Involved in the phosphoryl transfer between H-10 and H-175" evidence="2">
    <location>
        <position position="89"/>
    </location>
</feature>
<feature type="modified residue" description="Phosphohistidine; by HPr" evidence="2">
    <location>
        <position position="10"/>
    </location>
</feature>
<feature type="modified residue" description="N6-acetyllysine" evidence="2">
    <location>
        <position position="55"/>
    </location>
</feature>
<feature type="modified residue" description="Phosphohistidine; by EIIA" evidence="2 4">
    <location>
        <position position="175"/>
    </location>
</feature>
<feature type="modified residue" description="N6-acetyllysine" evidence="2">
    <location>
        <position position="234"/>
    </location>
</feature>
<sequence>MTIAIVIGTHGWAAEQLLKTAEMLLGEQENVGWIDFVPGENAETLIEKYNAQLAKLDTTKGVLFLVDTWGGSPFNAASRIVVDKEHYEVIAGVNIPMLVETLMARDDDPSFDELVALAVETGREGVKALKAKPVEKAAPAPAAAAPKAAPTPAKPMGPNDYMVIGLARIDDRLIHGQVATRWTKETNVSRIIVVSDEVAADTVRKTLLTQVAPPGVTAHVVDVAKMIRVYNNPKYAGERVMLLFTNPTDVERLVEGGVKITSVNVGGMAFRQGKTQVNNAVSVDEKDIEAFKKLNARGIELEVRKVSTDPKLKMMDLISKIDK</sequence>
<comment type="function">
    <text evidence="2">The phosphoenolpyruvate-dependent sugar phosphotransferase system (sugar PTS), a major carbohydrate active transport system, catalyzes the phosphorylation of incoming sugar substrates concomitantly with their translocation across the cell membrane. The enzyme II ManXYZ PTS system is involved in mannose transport.</text>
</comment>
<comment type="catalytic activity">
    <reaction evidence="2">
        <text>D-mannose(out) + N(pros)-phospho-L-histidyl-[protein] = D-mannose 6-phosphate(in) + L-histidyl-[protein]</text>
        <dbReference type="Rhea" id="RHEA:49232"/>
        <dbReference type="Rhea" id="RHEA-COMP:9745"/>
        <dbReference type="Rhea" id="RHEA-COMP:9746"/>
        <dbReference type="ChEBI" id="CHEBI:4208"/>
        <dbReference type="ChEBI" id="CHEBI:29979"/>
        <dbReference type="ChEBI" id="CHEBI:58735"/>
        <dbReference type="ChEBI" id="CHEBI:64837"/>
        <dbReference type="EC" id="2.7.1.191"/>
    </reaction>
</comment>
<comment type="subunit">
    <text evidence="2">Homodimer.</text>
</comment>
<comment type="subcellular location">
    <subcellularLocation>
        <location evidence="2">Cytoplasm</location>
    </subcellularLocation>
    <subcellularLocation>
        <location evidence="2">Cell inner membrane</location>
        <topology evidence="2">Peripheral membrane protein</topology>
    </subcellularLocation>
</comment>
<comment type="domain">
    <text evidence="2 5">The PTS EIIA type-4 domain is phosphorylated by phospho-HPr on a histidyl residue. Then, it transfers the phosphoryl group to the PTS EIIB type-4 domain.</text>
</comment>
<comment type="domain">
    <text evidence="4">The PTS EIIB type-4 domain is phosphorylated by phospho-EIIA on a histidyl residue. Then, it transfers the phosphoryl group to the sugar substrate concomitantly with the sugar uptake processed by the PTS EIIC type-4 domain.</text>
</comment>
<proteinExistence type="inferred from homology"/>
<keyword id="KW-0007">Acetylation</keyword>
<keyword id="KW-0997">Cell inner membrane</keyword>
<keyword id="KW-1003">Cell membrane</keyword>
<keyword id="KW-0963">Cytoplasm</keyword>
<keyword id="KW-0418">Kinase</keyword>
<keyword id="KW-0472">Membrane</keyword>
<keyword id="KW-0597">Phosphoprotein</keyword>
<keyword id="KW-0598">Phosphotransferase system</keyword>
<keyword id="KW-1185">Reference proteome</keyword>
<keyword id="KW-0762">Sugar transport</keyword>
<keyword id="KW-0808">Transferase</keyword>
<keyword id="KW-0813">Transport</keyword>
<reference key="1">
    <citation type="journal article" date="2002" name="Proc. Natl. Acad. Sci. U.S.A.">
        <title>Extensive mosaic structure revealed by the complete genome sequence of uropathogenic Escherichia coli.</title>
        <authorList>
            <person name="Welch R.A."/>
            <person name="Burland V."/>
            <person name="Plunkett G. III"/>
            <person name="Redford P."/>
            <person name="Roesch P."/>
            <person name="Rasko D."/>
            <person name="Buckles E.L."/>
            <person name="Liou S.-R."/>
            <person name="Boutin A."/>
            <person name="Hackett J."/>
            <person name="Stroud D."/>
            <person name="Mayhew G.F."/>
            <person name="Rose D.J."/>
            <person name="Zhou S."/>
            <person name="Schwartz D.C."/>
            <person name="Perna N.T."/>
            <person name="Mobley H.L.T."/>
            <person name="Donnenberg M.S."/>
            <person name="Blattner F.R."/>
        </authorList>
    </citation>
    <scope>NUCLEOTIDE SEQUENCE [LARGE SCALE GENOMIC DNA]</scope>
    <source>
        <strain>CFT073 / ATCC 700928 / UPEC</strain>
    </source>
</reference>
<evidence type="ECO:0000250" key="1"/>
<evidence type="ECO:0000250" key="2">
    <source>
        <dbReference type="UniProtKB" id="P69797"/>
    </source>
</evidence>
<evidence type="ECO:0000255" key="3">
    <source>
        <dbReference type="PROSITE-ProRule" id="PRU00419"/>
    </source>
</evidence>
<evidence type="ECO:0000255" key="4">
    <source>
        <dbReference type="PROSITE-ProRule" id="PRU00424"/>
    </source>
</evidence>
<evidence type="ECO:0000305" key="5"/>
<protein>
    <recommendedName>
        <fullName evidence="2">PTS system mannose-specific EIIAB component</fullName>
        <ecNumber evidence="2">2.7.1.191</ecNumber>
    </recommendedName>
    <alternativeName>
        <fullName evidence="2">EIIAB-Man</fullName>
    </alternativeName>
    <alternativeName>
        <fullName evidence="2">EIII-Man</fullName>
    </alternativeName>
    <domain>
        <recommendedName>
            <fullName evidence="2">Mannose-specific phosphotransferase enzyme IIA component</fullName>
        </recommendedName>
        <alternativeName>
            <fullName evidence="2">PTS system mannose-specific EIIA component</fullName>
        </alternativeName>
    </domain>
    <domain>
        <recommendedName>
            <fullName evidence="2">Mannose-specific phosphotransferase enzyme IIB component</fullName>
        </recommendedName>
        <alternativeName>
            <fullName evidence="2">PTS system mannose-specific EIIB component</fullName>
        </alternativeName>
    </domain>
</protein>
<dbReference type="EC" id="2.7.1.191" evidence="2"/>
<dbReference type="EMBL" id="AE014075">
    <property type="protein sequence ID" value="AAN80682.1"/>
    <property type="molecule type" value="Genomic_DNA"/>
</dbReference>
<dbReference type="RefSeq" id="WP_000150543.1">
    <property type="nucleotide sequence ID" value="NZ_CP051263.1"/>
</dbReference>
<dbReference type="SMR" id="P69798"/>
<dbReference type="STRING" id="199310.c2223"/>
<dbReference type="GeneID" id="93776066"/>
<dbReference type="KEGG" id="ecc:c2223"/>
<dbReference type="eggNOG" id="COG2893">
    <property type="taxonomic scope" value="Bacteria"/>
</dbReference>
<dbReference type="eggNOG" id="COG3444">
    <property type="taxonomic scope" value="Bacteria"/>
</dbReference>
<dbReference type="HOGENOM" id="CLU_074797_0_0_6"/>
<dbReference type="BioCyc" id="ECOL199310:C2223-MONOMER"/>
<dbReference type="Proteomes" id="UP000001410">
    <property type="component" value="Chromosome"/>
</dbReference>
<dbReference type="GO" id="GO:0005737">
    <property type="term" value="C:cytoplasm"/>
    <property type="evidence" value="ECO:0007669"/>
    <property type="project" value="UniProtKB-SubCell"/>
</dbReference>
<dbReference type="GO" id="GO:0005886">
    <property type="term" value="C:plasma membrane"/>
    <property type="evidence" value="ECO:0007669"/>
    <property type="project" value="UniProtKB-SubCell"/>
</dbReference>
<dbReference type="GO" id="GO:0016301">
    <property type="term" value="F:kinase activity"/>
    <property type="evidence" value="ECO:0007669"/>
    <property type="project" value="UniProtKB-KW"/>
</dbReference>
<dbReference type="GO" id="GO:0008982">
    <property type="term" value="F:protein-N(PI)-phosphohistidine-sugar phosphotransferase activity"/>
    <property type="evidence" value="ECO:0007669"/>
    <property type="project" value="InterPro"/>
</dbReference>
<dbReference type="GO" id="GO:0009401">
    <property type="term" value="P:phosphoenolpyruvate-dependent sugar phosphotransferase system"/>
    <property type="evidence" value="ECO:0007669"/>
    <property type="project" value="UniProtKB-KW"/>
</dbReference>
<dbReference type="CDD" id="cd00006">
    <property type="entry name" value="PTS_IIA_man"/>
    <property type="match status" value="1"/>
</dbReference>
<dbReference type="CDD" id="cd00001">
    <property type="entry name" value="PTS_IIB_man"/>
    <property type="match status" value="1"/>
</dbReference>
<dbReference type="FunFam" id="3.40.35.10:FF:000001">
    <property type="entry name" value="PTS system mannose-specific EIIAB component"/>
    <property type="match status" value="1"/>
</dbReference>
<dbReference type="FunFam" id="3.40.50.510:FF:000001">
    <property type="entry name" value="PTS system mannose-specific transporter subunit IIAB"/>
    <property type="match status" value="1"/>
</dbReference>
<dbReference type="Gene3D" id="3.40.50.510">
    <property type="entry name" value="Phosphotransferase system, mannose-type IIA component"/>
    <property type="match status" value="1"/>
</dbReference>
<dbReference type="Gene3D" id="3.40.35.10">
    <property type="entry name" value="Phosphotransferase system, sorbose subfamily IIB component"/>
    <property type="match status" value="1"/>
</dbReference>
<dbReference type="InterPro" id="IPR051471">
    <property type="entry name" value="Bacterial_PTS_sugar_comp"/>
</dbReference>
<dbReference type="InterPro" id="IPR013789">
    <property type="entry name" value="PTS_EIIA_man"/>
</dbReference>
<dbReference type="InterPro" id="IPR004701">
    <property type="entry name" value="PTS_EIIA_man-typ"/>
</dbReference>
<dbReference type="InterPro" id="IPR036662">
    <property type="entry name" value="PTS_EIIA_man-typ_sf"/>
</dbReference>
<dbReference type="InterPro" id="IPR033887">
    <property type="entry name" value="PTS_IIA_man"/>
</dbReference>
<dbReference type="InterPro" id="IPR004720">
    <property type="entry name" value="PTS_IIB_sorbose-sp"/>
</dbReference>
<dbReference type="InterPro" id="IPR036667">
    <property type="entry name" value="PTS_IIB_sorbose-sp_sf"/>
</dbReference>
<dbReference type="InterPro" id="IPR018455">
    <property type="entry name" value="PTS_IIB_sorbose-sp_subgr"/>
</dbReference>
<dbReference type="NCBIfam" id="TIGR00824">
    <property type="entry name" value="EIIA-man"/>
    <property type="match status" value="1"/>
</dbReference>
<dbReference type="NCBIfam" id="NF011670">
    <property type="entry name" value="PRK15088.1"/>
    <property type="match status" value="1"/>
</dbReference>
<dbReference type="NCBIfam" id="TIGR00854">
    <property type="entry name" value="pts-sorbose"/>
    <property type="match status" value="1"/>
</dbReference>
<dbReference type="PANTHER" id="PTHR33799">
    <property type="entry name" value="PTS PERMEASE-RELATED-RELATED"/>
    <property type="match status" value="1"/>
</dbReference>
<dbReference type="PANTHER" id="PTHR33799:SF1">
    <property type="entry name" value="PTS SYSTEM MANNOSE-SPECIFIC EIIAB COMPONENT-RELATED"/>
    <property type="match status" value="1"/>
</dbReference>
<dbReference type="Pfam" id="PF03610">
    <property type="entry name" value="EIIA-man"/>
    <property type="match status" value="1"/>
</dbReference>
<dbReference type="Pfam" id="PF03830">
    <property type="entry name" value="PTSIIB_sorb"/>
    <property type="match status" value="1"/>
</dbReference>
<dbReference type="SUPFAM" id="SSF52728">
    <property type="entry name" value="PTS IIb component"/>
    <property type="match status" value="1"/>
</dbReference>
<dbReference type="SUPFAM" id="SSF53062">
    <property type="entry name" value="PTS system fructose IIA component-like"/>
    <property type="match status" value="1"/>
</dbReference>
<dbReference type="PROSITE" id="PS51096">
    <property type="entry name" value="PTS_EIIA_TYPE_4"/>
    <property type="match status" value="1"/>
</dbReference>
<dbReference type="PROSITE" id="PS51101">
    <property type="entry name" value="PTS_EIIB_TYPE_4"/>
    <property type="match status" value="1"/>
</dbReference>
<name>PTNAB_ECOL6</name>
<accession>P69798</accession>
<accession>P08186</accession>
<accession>Q47350</accession>
<gene>
    <name type="primary">manX</name>
    <name type="ordered locus">c2223</name>
</gene>
<organism>
    <name type="scientific">Escherichia coli O6:H1 (strain CFT073 / ATCC 700928 / UPEC)</name>
    <dbReference type="NCBI Taxonomy" id="199310"/>
    <lineage>
        <taxon>Bacteria</taxon>
        <taxon>Pseudomonadati</taxon>
        <taxon>Pseudomonadota</taxon>
        <taxon>Gammaproteobacteria</taxon>
        <taxon>Enterobacterales</taxon>
        <taxon>Enterobacteriaceae</taxon>
        <taxon>Escherichia</taxon>
    </lineage>
</organism>